<comment type="function">
    <text evidence="1">Involved in peptide bond synthesis. Stimulates efficient translation and peptide-bond synthesis on native or reconstituted 70S ribosomes in vitro. Probably functions indirectly by altering the affinity of the ribosome for aminoacyl-tRNA, thus increasing their reactivity as acceptors for peptidyl transferase.</text>
</comment>
<comment type="pathway">
    <text evidence="1">Protein biosynthesis; polypeptide chain elongation.</text>
</comment>
<comment type="subcellular location">
    <subcellularLocation>
        <location evidence="1">Cytoplasm</location>
    </subcellularLocation>
</comment>
<comment type="similarity">
    <text evidence="1">Belongs to the elongation factor P family.</text>
</comment>
<evidence type="ECO:0000255" key="1">
    <source>
        <dbReference type="HAMAP-Rule" id="MF_00141"/>
    </source>
</evidence>
<proteinExistence type="inferred from homology"/>
<name>EFP_PROM2</name>
<protein>
    <recommendedName>
        <fullName evidence="1">Elongation factor P</fullName>
        <shortName evidence="1">EF-P</shortName>
    </recommendedName>
</protein>
<reference key="1">
    <citation type="journal article" date="2007" name="PLoS Genet.">
        <title>Patterns and implications of gene gain and loss in the evolution of Prochlorococcus.</title>
        <authorList>
            <person name="Kettler G.C."/>
            <person name="Martiny A.C."/>
            <person name="Huang K."/>
            <person name="Zucker J."/>
            <person name="Coleman M.L."/>
            <person name="Rodrigue S."/>
            <person name="Chen F."/>
            <person name="Lapidus A."/>
            <person name="Ferriera S."/>
            <person name="Johnson J."/>
            <person name="Steglich C."/>
            <person name="Church G.M."/>
            <person name="Richardson P."/>
            <person name="Chisholm S.W."/>
        </authorList>
    </citation>
    <scope>NUCLEOTIDE SEQUENCE [LARGE SCALE GENOMIC DNA]</scope>
    <source>
        <strain>MIT 9215</strain>
    </source>
</reference>
<keyword id="KW-0963">Cytoplasm</keyword>
<keyword id="KW-0251">Elongation factor</keyword>
<keyword id="KW-0648">Protein biosynthesis</keyword>
<gene>
    <name evidence="1" type="primary">efp</name>
    <name type="ordered locus">P9215_00251</name>
</gene>
<sequence>MISSNDFRTGTTIELDGQVWRVVEFLHVKPGKGSAFVRTKLKSVQSGNVVEKTFRAGESVQQAILEKSNLQHTYVESGDYVFMDMSSFEETRLTSEQIGRGAKYLKEGMEVNVIFHNGKVLEVELPISITLKVTETDPGVKGDTASGGTKPAILETGAQVMVPLFISVGEMIKVDTRNDSYLGREN</sequence>
<feature type="chain" id="PRO_1000057925" description="Elongation factor P">
    <location>
        <begin position="1"/>
        <end position="186"/>
    </location>
</feature>
<organism>
    <name type="scientific">Prochlorococcus marinus (strain MIT 9215)</name>
    <dbReference type="NCBI Taxonomy" id="93060"/>
    <lineage>
        <taxon>Bacteria</taxon>
        <taxon>Bacillati</taxon>
        <taxon>Cyanobacteriota</taxon>
        <taxon>Cyanophyceae</taxon>
        <taxon>Synechococcales</taxon>
        <taxon>Prochlorococcaceae</taxon>
        <taxon>Prochlorococcus</taxon>
    </lineage>
</organism>
<dbReference type="EMBL" id="CP000825">
    <property type="protein sequence ID" value="ABV49644.1"/>
    <property type="molecule type" value="Genomic_DNA"/>
</dbReference>
<dbReference type="RefSeq" id="WP_012006830.1">
    <property type="nucleotide sequence ID" value="NC_009840.1"/>
</dbReference>
<dbReference type="SMR" id="A8G213"/>
<dbReference type="STRING" id="93060.P9215_00251"/>
<dbReference type="KEGG" id="pmh:P9215_00251"/>
<dbReference type="eggNOG" id="COG0231">
    <property type="taxonomic scope" value="Bacteria"/>
</dbReference>
<dbReference type="HOGENOM" id="CLU_074944_0_1_3"/>
<dbReference type="OrthoDB" id="9801844at2"/>
<dbReference type="UniPathway" id="UPA00345"/>
<dbReference type="Proteomes" id="UP000002014">
    <property type="component" value="Chromosome"/>
</dbReference>
<dbReference type="GO" id="GO:0005737">
    <property type="term" value="C:cytoplasm"/>
    <property type="evidence" value="ECO:0007669"/>
    <property type="project" value="UniProtKB-SubCell"/>
</dbReference>
<dbReference type="GO" id="GO:0003746">
    <property type="term" value="F:translation elongation factor activity"/>
    <property type="evidence" value="ECO:0007669"/>
    <property type="project" value="UniProtKB-UniRule"/>
</dbReference>
<dbReference type="GO" id="GO:0043043">
    <property type="term" value="P:peptide biosynthetic process"/>
    <property type="evidence" value="ECO:0007669"/>
    <property type="project" value="InterPro"/>
</dbReference>
<dbReference type="CDD" id="cd04470">
    <property type="entry name" value="S1_EF-P_repeat_1"/>
    <property type="match status" value="1"/>
</dbReference>
<dbReference type="CDD" id="cd05794">
    <property type="entry name" value="S1_EF-P_repeat_2"/>
    <property type="match status" value="1"/>
</dbReference>
<dbReference type="FunFam" id="2.30.30.30:FF:000003">
    <property type="entry name" value="Elongation factor P"/>
    <property type="match status" value="1"/>
</dbReference>
<dbReference type="FunFam" id="2.40.50.140:FF:000004">
    <property type="entry name" value="Elongation factor P"/>
    <property type="match status" value="1"/>
</dbReference>
<dbReference type="FunFam" id="2.40.50.140:FF:000009">
    <property type="entry name" value="Elongation factor P"/>
    <property type="match status" value="1"/>
</dbReference>
<dbReference type="Gene3D" id="2.30.30.30">
    <property type="match status" value="1"/>
</dbReference>
<dbReference type="Gene3D" id="2.40.50.140">
    <property type="entry name" value="Nucleic acid-binding proteins"/>
    <property type="match status" value="2"/>
</dbReference>
<dbReference type="HAMAP" id="MF_00141">
    <property type="entry name" value="EF_P"/>
    <property type="match status" value="1"/>
</dbReference>
<dbReference type="InterPro" id="IPR015365">
    <property type="entry name" value="Elong-fact-P_C"/>
</dbReference>
<dbReference type="InterPro" id="IPR012340">
    <property type="entry name" value="NA-bd_OB-fold"/>
</dbReference>
<dbReference type="InterPro" id="IPR014722">
    <property type="entry name" value="Rib_uL2_dom2"/>
</dbReference>
<dbReference type="InterPro" id="IPR020599">
    <property type="entry name" value="Transl_elong_fac_P/YeiP"/>
</dbReference>
<dbReference type="InterPro" id="IPR013185">
    <property type="entry name" value="Transl_elong_KOW-like"/>
</dbReference>
<dbReference type="InterPro" id="IPR001059">
    <property type="entry name" value="Transl_elong_P/YeiP_cen"/>
</dbReference>
<dbReference type="InterPro" id="IPR013852">
    <property type="entry name" value="Transl_elong_P/YeiP_CS"/>
</dbReference>
<dbReference type="InterPro" id="IPR011768">
    <property type="entry name" value="Transl_elongation_fac_P"/>
</dbReference>
<dbReference type="InterPro" id="IPR008991">
    <property type="entry name" value="Translation_prot_SH3-like_sf"/>
</dbReference>
<dbReference type="NCBIfam" id="TIGR00038">
    <property type="entry name" value="efp"/>
    <property type="match status" value="1"/>
</dbReference>
<dbReference type="NCBIfam" id="NF001810">
    <property type="entry name" value="PRK00529.1"/>
    <property type="match status" value="1"/>
</dbReference>
<dbReference type="PANTHER" id="PTHR30053">
    <property type="entry name" value="ELONGATION FACTOR P"/>
    <property type="match status" value="1"/>
</dbReference>
<dbReference type="PANTHER" id="PTHR30053:SF12">
    <property type="entry name" value="ELONGATION FACTOR P (EF-P) FAMILY PROTEIN"/>
    <property type="match status" value="1"/>
</dbReference>
<dbReference type="Pfam" id="PF01132">
    <property type="entry name" value="EFP"/>
    <property type="match status" value="1"/>
</dbReference>
<dbReference type="Pfam" id="PF08207">
    <property type="entry name" value="EFP_N"/>
    <property type="match status" value="1"/>
</dbReference>
<dbReference type="Pfam" id="PF09285">
    <property type="entry name" value="Elong-fact-P_C"/>
    <property type="match status" value="1"/>
</dbReference>
<dbReference type="PIRSF" id="PIRSF005901">
    <property type="entry name" value="EF-P"/>
    <property type="match status" value="1"/>
</dbReference>
<dbReference type="SMART" id="SM01185">
    <property type="entry name" value="EFP"/>
    <property type="match status" value="1"/>
</dbReference>
<dbReference type="SMART" id="SM00841">
    <property type="entry name" value="Elong-fact-P_C"/>
    <property type="match status" value="1"/>
</dbReference>
<dbReference type="SUPFAM" id="SSF50249">
    <property type="entry name" value="Nucleic acid-binding proteins"/>
    <property type="match status" value="2"/>
</dbReference>
<dbReference type="SUPFAM" id="SSF50104">
    <property type="entry name" value="Translation proteins SH3-like domain"/>
    <property type="match status" value="1"/>
</dbReference>
<dbReference type="PROSITE" id="PS01275">
    <property type="entry name" value="EFP"/>
    <property type="match status" value="1"/>
</dbReference>
<accession>A8G213</accession>